<comment type="function">
    <text evidence="3">Probable transcription factor that binds to the DNA sequence 5'-CAAT[GC]ATTG-3'.</text>
</comment>
<comment type="subunit">
    <text evidence="3 5">Homodimer (Probable). May form a heterodimer with HOX1, HOX3 or HOX7.</text>
</comment>
<comment type="subcellular location">
    <subcellularLocation>
        <location evidence="5">Nucleus</location>
    </subcellularLocation>
</comment>
<comment type="tissue specificity">
    <text evidence="3 4">Expressed in seedlings, roots, leaves, nodes, internodes, flowers and embryo.</text>
</comment>
<comment type="similarity">
    <text evidence="5">Belongs to the HD-ZIP homeobox family. Class II subfamily.</text>
</comment>
<evidence type="ECO:0000255" key="1">
    <source>
        <dbReference type="PROSITE-ProRule" id="PRU00108"/>
    </source>
</evidence>
<evidence type="ECO:0000256" key="2">
    <source>
        <dbReference type="SAM" id="MobiDB-lite"/>
    </source>
</evidence>
<evidence type="ECO:0000269" key="3">
    <source>
    </source>
</evidence>
<evidence type="ECO:0000269" key="4">
    <source>
    </source>
</evidence>
<evidence type="ECO:0000305" key="5"/>
<feature type="chain" id="PRO_0000331676" description="Homeobox-leucine zipper protein HOX2">
    <location>
        <begin position="1"/>
        <end position="308"/>
    </location>
</feature>
<feature type="DNA-binding region" description="Homeobox" evidence="1">
    <location>
        <begin position="112"/>
        <end position="171"/>
    </location>
</feature>
<feature type="region of interest" description="Disordered" evidence="2">
    <location>
        <begin position="15"/>
        <end position="36"/>
    </location>
</feature>
<feature type="region of interest" description="Disordered" evidence="2">
    <location>
        <begin position="71"/>
        <end position="117"/>
    </location>
</feature>
<feature type="region of interest" description="Leucine-zipper">
    <location>
        <begin position="170"/>
        <end position="214"/>
    </location>
</feature>
<feature type="compositionally biased region" description="Low complexity" evidence="2">
    <location>
        <begin position="74"/>
        <end position="88"/>
    </location>
</feature>
<feature type="sequence conflict" description="In Ref. 3; AAD37695." evidence="5" ref="3">
    <original>T</original>
    <variation>I</variation>
    <location>
        <position position="254"/>
    </location>
</feature>
<reference key="1">
    <citation type="submission" date="2002-12" db="EMBL/GenBank/DDBJ databases">
        <title>Characterization of the new HD-Zip gene of Oryza sativa.</title>
        <authorList>
            <person name="Shen W.-B."/>
            <person name="Ye M.-B."/>
            <person name="Huang L.-Q."/>
        </authorList>
    </citation>
    <scope>NUCLEOTIDE SEQUENCE [MRNA]</scope>
    <source>
        <strain>cv. Shanyou 63</strain>
        <tissue>Seed embryo</tissue>
    </source>
</reference>
<reference key="2">
    <citation type="journal article" date="2005" name="PLoS Biol.">
        <title>The genomes of Oryza sativa: a history of duplications.</title>
        <authorList>
            <person name="Yu J."/>
            <person name="Wang J."/>
            <person name="Lin W."/>
            <person name="Li S."/>
            <person name="Li H."/>
            <person name="Zhou J."/>
            <person name="Ni P."/>
            <person name="Dong W."/>
            <person name="Hu S."/>
            <person name="Zeng C."/>
            <person name="Zhang J."/>
            <person name="Zhang Y."/>
            <person name="Li R."/>
            <person name="Xu Z."/>
            <person name="Li S."/>
            <person name="Li X."/>
            <person name="Zheng H."/>
            <person name="Cong L."/>
            <person name="Lin L."/>
            <person name="Yin J."/>
            <person name="Geng J."/>
            <person name="Li G."/>
            <person name="Shi J."/>
            <person name="Liu J."/>
            <person name="Lv H."/>
            <person name="Li J."/>
            <person name="Wang J."/>
            <person name="Deng Y."/>
            <person name="Ran L."/>
            <person name="Shi X."/>
            <person name="Wang X."/>
            <person name="Wu Q."/>
            <person name="Li C."/>
            <person name="Ren X."/>
            <person name="Wang J."/>
            <person name="Wang X."/>
            <person name="Li D."/>
            <person name="Liu D."/>
            <person name="Zhang X."/>
            <person name="Ji Z."/>
            <person name="Zhao W."/>
            <person name="Sun Y."/>
            <person name="Zhang Z."/>
            <person name="Bao J."/>
            <person name="Han Y."/>
            <person name="Dong L."/>
            <person name="Ji J."/>
            <person name="Chen P."/>
            <person name="Wu S."/>
            <person name="Liu J."/>
            <person name="Xiao Y."/>
            <person name="Bu D."/>
            <person name="Tan J."/>
            <person name="Yang L."/>
            <person name="Ye C."/>
            <person name="Zhang J."/>
            <person name="Xu J."/>
            <person name="Zhou Y."/>
            <person name="Yu Y."/>
            <person name="Zhang B."/>
            <person name="Zhuang S."/>
            <person name="Wei H."/>
            <person name="Liu B."/>
            <person name="Lei M."/>
            <person name="Yu H."/>
            <person name="Li Y."/>
            <person name="Xu H."/>
            <person name="Wei S."/>
            <person name="He X."/>
            <person name="Fang L."/>
            <person name="Zhang Z."/>
            <person name="Zhang Y."/>
            <person name="Huang X."/>
            <person name="Su Z."/>
            <person name="Tong W."/>
            <person name="Li J."/>
            <person name="Tong Z."/>
            <person name="Li S."/>
            <person name="Ye J."/>
            <person name="Wang L."/>
            <person name="Fang L."/>
            <person name="Lei T."/>
            <person name="Chen C.-S."/>
            <person name="Chen H.-C."/>
            <person name="Xu Z."/>
            <person name="Li H."/>
            <person name="Huang H."/>
            <person name="Zhang F."/>
            <person name="Xu H."/>
            <person name="Li N."/>
            <person name="Zhao C."/>
            <person name="Li S."/>
            <person name="Dong L."/>
            <person name="Huang Y."/>
            <person name="Li L."/>
            <person name="Xi Y."/>
            <person name="Qi Q."/>
            <person name="Li W."/>
            <person name="Zhang B."/>
            <person name="Hu W."/>
            <person name="Zhang Y."/>
            <person name="Tian X."/>
            <person name="Jiao Y."/>
            <person name="Liang X."/>
            <person name="Jin J."/>
            <person name="Gao L."/>
            <person name="Zheng W."/>
            <person name="Hao B."/>
            <person name="Liu S.-M."/>
            <person name="Wang W."/>
            <person name="Yuan L."/>
            <person name="Cao M."/>
            <person name="McDermott J."/>
            <person name="Samudrala R."/>
            <person name="Wang J."/>
            <person name="Wong G.K.-S."/>
            <person name="Yang H."/>
        </authorList>
    </citation>
    <scope>NUCLEOTIDE SEQUENCE [LARGE SCALE GENOMIC DNA]</scope>
    <source>
        <strain>cv. 93-11</strain>
    </source>
</reference>
<reference key="3">
    <citation type="journal article" date="2000" name="Mol. Gen. Genet.">
        <title>HD-Zip proteins of families I and II from rice: interactions and functional properties.</title>
        <authorList>
            <person name="Meijer A.H."/>
            <person name="de Kam R.J."/>
            <person name="d'Erfurth I."/>
            <person name="Shen W.-B."/>
            <person name="Hoge J.H.C."/>
        </authorList>
    </citation>
    <scope>NUCLEOTIDE SEQUENCE [MRNA] OF 22-308</scope>
    <scope>FUNCTION</scope>
    <scope>SUBUNIT</scope>
    <scope>TISSUE SPECIFICITY</scope>
    <source>
        <strain>cv. IR58</strain>
        <tissue>Seed embryo</tissue>
    </source>
</reference>
<reference key="4">
    <citation type="journal article" date="2008" name="Plant Mol. Biol.">
        <title>A genome-wide survey of HD-Zip genes in rice and analysis of drought-responsive family members.</title>
        <authorList>
            <person name="Agalou A."/>
            <person name="Purwantomo S."/>
            <person name="Oevernaes E."/>
            <person name="Johannesson H."/>
            <person name="Zhu X."/>
            <person name="Estiati A."/>
            <person name="de Kam R.J."/>
            <person name="Engstroem P."/>
            <person name="Slamet-Loedin I.H."/>
            <person name="Zhu Z."/>
            <person name="Wang M."/>
            <person name="Xiong L."/>
            <person name="Meijer A.H."/>
            <person name="Ouwerkerk P.B.F."/>
        </authorList>
    </citation>
    <scope>NUCLEOTIDE SEQUENCE [MRNA] OF 94-220</scope>
    <scope>TISSUE SPECIFICITY</scope>
    <scope>GENE FAMILY</scope>
    <scope>NOMENCLATURE</scope>
    <source>
        <strain>cv. Minghui 86</strain>
    </source>
</reference>
<organism>
    <name type="scientific">Oryza sativa subsp. indica</name>
    <name type="common">Rice</name>
    <dbReference type="NCBI Taxonomy" id="39946"/>
    <lineage>
        <taxon>Eukaryota</taxon>
        <taxon>Viridiplantae</taxon>
        <taxon>Streptophyta</taxon>
        <taxon>Embryophyta</taxon>
        <taxon>Tracheophyta</taxon>
        <taxon>Spermatophyta</taxon>
        <taxon>Magnoliopsida</taxon>
        <taxon>Liliopsida</taxon>
        <taxon>Poales</taxon>
        <taxon>Poaceae</taxon>
        <taxon>BOP clade</taxon>
        <taxon>Oryzoideae</taxon>
        <taxon>Oryzeae</taxon>
        <taxon>Oryzinae</taxon>
        <taxon>Oryza</taxon>
        <taxon>Oryza sativa</taxon>
    </lineage>
</organism>
<accession>Q84U86</accession>
<accession>A2Y933</accession>
<accession>A5JPT9</accession>
<accession>Q9XH39</accession>
<keyword id="KW-0238">DNA-binding</keyword>
<keyword id="KW-0371">Homeobox</keyword>
<keyword id="KW-0539">Nucleus</keyword>
<keyword id="KW-1185">Reference proteome</keyword>
<keyword id="KW-0804">Transcription</keyword>
<keyword id="KW-0805">Transcription regulation</keyword>
<dbReference type="EMBL" id="AY206864">
    <property type="protein sequence ID" value="AAO47728.1"/>
    <property type="molecule type" value="mRNA"/>
</dbReference>
<dbReference type="EMBL" id="CM000131">
    <property type="status" value="NOT_ANNOTATED_CDS"/>
    <property type="molecule type" value="Genomic_DNA"/>
</dbReference>
<dbReference type="EMBL" id="AF145726">
    <property type="protein sequence ID" value="AAD37695.1"/>
    <property type="molecule type" value="mRNA"/>
</dbReference>
<dbReference type="EMBL" id="EF555522">
    <property type="protein sequence ID" value="ABQ57265.1"/>
    <property type="molecule type" value="mRNA"/>
</dbReference>
<dbReference type="SMR" id="Q84U86"/>
<dbReference type="EnsemblPlants" id="BGIOSGA022272-TA">
    <property type="protein sequence ID" value="BGIOSGA022272-PA"/>
    <property type="gene ID" value="BGIOSGA022272"/>
</dbReference>
<dbReference type="EnsemblPlants" id="OsMH63_06G002780_01">
    <property type="protein sequence ID" value="OsMH63_06G002780_01"/>
    <property type="gene ID" value="OsMH63_06G002780"/>
</dbReference>
<dbReference type="EnsemblPlants" id="OsPr106_06g0002820.01">
    <property type="protein sequence ID" value="OsPr106_06g0002820.01"/>
    <property type="gene ID" value="OsPr106_06g0002820"/>
</dbReference>
<dbReference type="Gramene" id="BGIOSGA022272-TA">
    <property type="protein sequence ID" value="BGIOSGA022272-PA"/>
    <property type="gene ID" value="BGIOSGA022272"/>
</dbReference>
<dbReference type="Gramene" id="OsMH63_06G002780_01">
    <property type="protein sequence ID" value="OsMH63_06G002780_01"/>
    <property type="gene ID" value="OsMH63_06G002780"/>
</dbReference>
<dbReference type="Gramene" id="OsPr106_06g0002820.01">
    <property type="protein sequence ID" value="OsPr106_06g0002820.01"/>
    <property type="gene ID" value="OsPr106_06g0002820"/>
</dbReference>
<dbReference type="HOGENOM" id="CLU_049516_4_0_1"/>
<dbReference type="OMA" id="QQQCHPK"/>
<dbReference type="Proteomes" id="UP000007015">
    <property type="component" value="Chromosome 6"/>
</dbReference>
<dbReference type="ExpressionAtlas" id="Q84U86">
    <property type="expression patterns" value="differential"/>
</dbReference>
<dbReference type="GO" id="GO:0005634">
    <property type="term" value="C:nucleus"/>
    <property type="evidence" value="ECO:0007669"/>
    <property type="project" value="UniProtKB-SubCell"/>
</dbReference>
<dbReference type="GO" id="GO:0000981">
    <property type="term" value="F:DNA-binding transcription factor activity, RNA polymerase II-specific"/>
    <property type="evidence" value="ECO:0007669"/>
    <property type="project" value="InterPro"/>
</dbReference>
<dbReference type="GO" id="GO:0043565">
    <property type="term" value="F:sequence-specific DNA binding"/>
    <property type="evidence" value="ECO:0007669"/>
    <property type="project" value="InterPro"/>
</dbReference>
<dbReference type="CDD" id="cd00086">
    <property type="entry name" value="homeodomain"/>
    <property type="match status" value="1"/>
</dbReference>
<dbReference type="FunFam" id="1.10.10.60:FF:000577">
    <property type="entry name" value="Homeobox-leucine zipper protein 18"/>
    <property type="match status" value="1"/>
</dbReference>
<dbReference type="Gene3D" id="1.10.10.60">
    <property type="entry name" value="Homeodomain-like"/>
    <property type="match status" value="1"/>
</dbReference>
<dbReference type="InterPro" id="IPR001356">
    <property type="entry name" value="HD"/>
</dbReference>
<dbReference type="InterPro" id="IPR050762">
    <property type="entry name" value="HD-ZIP_Homeobox_LZ_Class_II"/>
</dbReference>
<dbReference type="InterPro" id="IPR017970">
    <property type="entry name" value="Homeobox_CS"/>
</dbReference>
<dbReference type="InterPro" id="IPR009057">
    <property type="entry name" value="Homeodomain-like_sf"/>
</dbReference>
<dbReference type="InterPro" id="IPR000047">
    <property type="entry name" value="HTH_motif"/>
</dbReference>
<dbReference type="InterPro" id="IPR003106">
    <property type="entry name" value="Leu_zip_homeo"/>
</dbReference>
<dbReference type="PANTHER" id="PTHR45714">
    <property type="entry name" value="HOMEOBOX-LEUCINE ZIPPER PROTEIN HAT14"/>
    <property type="match status" value="1"/>
</dbReference>
<dbReference type="PANTHER" id="PTHR45714:SF7">
    <property type="entry name" value="HOMEOBOX-LEUCINE ZIPPER PROTEIN HOX2"/>
    <property type="match status" value="1"/>
</dbReference>
<dbReference type="Pfam" id="PF02183">
    <property type="entry name" value="HALZ"/>
    <property type="match status" value="1"/>
</dbReference>
<dbReference type="Pfam" id="PF00046">
    <property type="entry name" value="Homeodomain"/>
    <property type="match status" value="1"/>
</dbReference>
<dbReference type="PRINTS" id="PR00031">
    <property type="entry name" value="HTHREPRESSR"/>
</dbReference>
<dbReference type="SMART" id="SM00340">
    <property type="entry name" value="HALZ"/>
    <property type="match status" value="1"/>
</dbReference>
<dbReference type="SMART" id="SM00389">
    <property type="entry name" value="HOX"/>
    <property type="match status" value="1"/>
</dbReference>
<dbReference type="SUPFAM" id="SSF46689">
    <property type="entry name" value="Homeodomain-like"/>
    <property type="match status" value="1"/>
</dbReference>
<dbReference type="PROSITE" id="PS00027">
    <property type="entry name" value="HOMEOBOX_1"/>
    <property type="match status" value="1"/>
</dbReference>
<dbReference type="PROSITE" id="PS50071">
    <property type="entry name" value="HOMEOBOX_2"/>
    <property type="match status" value="1"/>
</dbReference>
<name>HOX2_ORYSI</name>
<proteinExistence type="evidence at protein level"/>
<sequence>MMDLGLSLGLGLASQGSLTSSTTTTSSPGAGSSSPWAAALNSIVGDVRRDQAAAHAAAAVGVGVGGEEMYQGRASTSPDSAAALSSASGKRERELERSGSGVDDDDGADGAGGRKKLRLSKDQAAVLEECFKTHSTLNPKQKVALANRLGLRPRQVEVWFQNRRARTKLKQTEVDCEYLKRWCERLADENKRLEKELADLRALKAAPSPASASAMQPSSSAAATLTMCPSCRRVATAGAPHQPNHQQCHPKSNTTISSSSTAAAAVAVAGGNVLPSHCQFFPAAAAAADRTSQSTWNAAAPLVTRELF</sequence>
<protein>
    <recommendedName>
        <fullName>Homeobox-leucine zipper protein HOX2</fullName>
    </recommendedName>
    <alternativeName>
        <fullName>HD-ZIP protein HOX2</fullName>
    </alternativeName>
    <alternativeName>
        <fullName>Homeodomain transcription factor HOX2</fullName>
    </alternativeName>
    <alternativeName>
        <fullName>OsHox2</fullName>
    </alternativeName>
</protein>
<gene>
    <name type="primary">HOX2</name>
    <name type="ORF">OsI_020826</name>
</gene>